<gene>
    <name evidence="1" type="primary">atpG</name>
    <name type="ordered locus">Ent638_4131</name>
</gene>
<sequence>MAGAKEIRSKIASVQNTQKITKAMEMVAASKMRKSQDRMASSRPYADTMRKVIGHLANGNLEYKHPYLEERDVKRVGYLVVSTDRGLCGGLNINLFKKLLADMKVWSDKGVQSDIAMIGSKGVSFFNSVGGNIVAQVTGMGDNPSLSELIGPVKVMLQAYDEGRLDRLYVVSNKFINTMSQVPTLTQLLPLPASEDQELKQKAWDYLYEPDPKPLLDTLLRRYVESQVYQGVVENLASEQAARMVAMKAATDNGGSLIKELQLVYNKARQASITQELTEIVGGASAV</sequence>
<keyword id="KW-0066">ATP synthesis</keyword>
<keyword id="KW-0997">Cell inner membrane</keyword>
<keyword id="KW-1003">Cell membrane</keyword>
<keyword id="KW-0139">CF(1)</keyword>
<keyword id="KW-0375">Hydrogen ion transport</keyword>
<keyword id="KW-0406">Ion transport</keyword>
<keyword id="KW-0472">Membrane</keyword>
<keyword id="KW-0813">Transport</keyword>
<organism>
    <name type="scientific">Enterobacter sp. (strain 638)</name>
    <dbReference type="NCBI Taxonomy" id="399742"/>
    <lineage>
        <taxon>Bacteria</taxon>
        <taxon>Pseudomonadati</taxon>
        <taxon>Pseudomonadota</taxon>
        <taxon>Gammaproteobacteria</taxon>
        <taxon>Enterobacterales</taxon>
        <taxon>Enterobacteriaceae</taxon>
        <taxon>Enterobacter</taxon>
    </lineage>
</organism>
<proteinExistence type="inferred from homology"/>
<feature type="chain" id="PRO_1000062292" description="ATP synthase gamma chain">
    <location>
        <begin position="1"/>
        <end position="287"/>
    </location>
</feature>
<reference key="1">
    <citation type="journal article" date="2010" name="PLoS Genet.">
        <title>Genome sequence of the plant growth promoting endophytic bacterium Enterobacter sp. 638.</title>
        <authorList>
            <person name="Taghavi S."/>
            <person name="van der Lelie D."/>
            <person name="Hoffman A."/>
            <person name="Zhang Y.B."/>
            <person name="Walla M.D."/>
            <person name="Vangronsveld J."/>
            <person name="Newman L."/>
            <person name="Monchy S."/>
        </authorList>
    </citation>
    <scope>NUCLEOTIDE SEQUENCE [LARGE SCALE GENOMIC DNA]</scope>
    <source>
        <strain>638</strain>
    </source>
</reference>
<comment type="function">
    <text evidence="1">Produces ATP from ADP in the presence of a proton gradient across the membrane. The gamma chain is believed to be important in regulating ATPase activity and the flow of protons through the CF(0) complex.</text>
</comment>
<comment type="subunit">
    <text evidence="1">F-type ATPases have 2 components, CF(1) - the catalytic core - and CF(0) - the membrane proton channel. CF(1) has five subunits: alpha(3), beta(3), gamma(1), delta(1), epsilon(1). CF(0) has three main subunits: a, b and c.</text>
</comment>
<comment type="subcellular location">
    <subcellularLocation>
        <location evidence="1">Cell inner membrane</location>
        <topology evidence="1">Peripheral membrane protein</topology>
    </subcellularLocation>
</comment>
<comment type="similarity">
    <text evidence="1">Belongs to the ATPase gamma chain family.</text>
</comment>
<evidence type="ECO:0000255" key="1">
    <source>
        <dbReference type="HAMAP-Rule" id="MF_00815"/>
    </source>
</evidence>
<accession>A4WGF4</accession>
<name>ATPG_ENT38</name>
<protein>
    <recommendedName>
        <fullName evidence="1">ATP synthase gamma chain</fullName>
    </recommendedName>
    <alternativeName>
        <fullName evidence="1">ATP synthase F1 sector gamma subunit</fullName>
    </alternativeName>
    <alternativeName>
        <fullName evidence="1">F-ATPase gamma subunit</fullName>
    </alternativeName>
</protein>
<dbReference type="EMBL" id="CP000653">
    <property type="protein sequence ID" value="ABP62784.1"/>
    <property type="molecule type" value="Genomic_DNA"/>
</dbReference>
<dbReference type="RefSeq" id="WP_015961087.1">
    <property type="nucleotide sequence ID" value="NC_009436.1"/>
</dbReference>
<dbReference type="SMR" id="A4WGF4"/>
<dbReference type="STRING" id="399742.Ent638_4131"/>
<dbReference type="KEGG" id="ent:Ent638_4131"/>
<dbReference type="eggNOG" id="COG0224">
    <property type="taxonomic scope" value="Bacteria"/>
</dbReference>
<dbReference type="HOGENOM" id="CLU_050669_0_1_6"/>
<dbReference type="OrthoDB" id="9812769at2"/>
<dbReference type="Proteomes" id="UP000000230">
    <property type="component" value="Chromosome"/>
</dbReference>
<dbReference type="GO" id="GO:0005886">
    <property type="term" value="C:plasma membrane"/>
    <property type="evidence" value="ECO:0007669"/>
    <property type="project" value="UniProtKB-SubCell"/>
</dbReference>
<dbReference type="GO" id="GO:0045259">
    <property type="term" value="C:proton-transporting ATP synthase complex"/>
    <property type="evidence" value="ECO:0007669"/>
    <property type="project" value="UniProtKB-KW"/>
</dbReference>
<dbReference type="GO" id="GO:0005524">
    <property type="term" value="F:ATP binding"/>
    <property type="evidence" value="ECO:0007669"/>
    <property type="project" value="UniProtKB-UniRule"/>
</dbReference>
<dbReference type="GO" id="GO:0046933">
    <property type="term" value="F:proton-transporting ATP synthase activity, rotational mechanism"/>
    <property type="evidence" value="ECO:0007669"/>
    <property type="project" value="UniProtKB-UniRule"/>
</dbReference>
<dbReference type="GO" id="GO:0042777">
    <property type="term" value="P:proton motive force-driven plasma membrane ATP synthesis"/>
    <property type="evidence" value="ECO:0007669"/>
    <property type="project" value="UniProtKB-UniRule"/>
</dbReference>
<dbReference type="CDD" id="cd12151">
    <property type="entry name" value="F1-ATPase_gamma"/>
    <property type="match status" value="1"/>
</dbReference>
<dbReference type="FunFam" id="1.10.287.80:FF:000005">
    <property type="entry name" value="ATP synthase gamma chain"/>
    <property type="match status" value="2"/>
</dbReference>
<dbReference type="FunFam" id="3.40.1380.10:FF:000001">
    <property type="entry name" value="ATP synthase gamma chain"/>
    <property type="match status" value="1"/>
</dbReference>
<dbReference type="Gene3D" id="3.40.1380.10">
    <property type="match status" value="1"/>
</dbReference>
<dbReference type="Gene3D" id="1.10.287.80">
    <property type="entry name" value="ATP synthase, gamma subunit, helix hairpin domain"/>
    <property type="match status" value="1"/>
</dbReference>
<dbReference type="HAMAP" id="MF_00815">
    <property type="entry name" value="ATP_synth_gamma_bact"/>
    <property type="match status" value="1"/>
</dbReference>
<dbReference type="InterPro" id="IPR035968">
    <property type="entry name" value="ATP_synth_F1_ATPase_gsu"/>
</dbReference>
<dbReference type="InterPro" id="IPR000131">
    <property type="entry name" value="ATP_synth_F1_gsu"/>
</dbReference>
<dbReference type="InterPro" id="IPR023632">
    <property type="entry name" value="ATP_synth_F1_gsu_CS"/>
</dbReference>
<dbReference type="NCBIfam" id="TIGR01146">
    <property type="entry name" value="ATPsyn_F1gamma"/>
    <property type="match status" value="1"/>
</dbReference>
<dbReference type="NCBIfam" id="NF004144">
    <property type="entry name" value="PRK05621.1-1"/>
    <property type="match status" value="1"/>
</dbReference>
<dbReference type="PANTHER" id="PTHR11693">
    <property type="entry name" value="ATP SYNTHASE GAMMA CHAIN"/>
    <property type="match status" value="1"/>
</dbReference>
<dbReference type="PANTHER" id="PTHR11693:SF22">
    <property type="entry name" value="ATP SYNTHASE SUBUNIT GAMMA, MITOCHONDRIAL"/>
    <property type="match status" value="1"/>
</dbReference>
<dbReference type="Pfam" id="PF00231">
    <property type="entry name" value="ATP-synt"/>
    <property type="match status" value="1"/>
</dbReference>
<dbReference type="PRINTS" id="PR00126">
    <property type="entry name" value="ATPASEGAMMA"/>
</dbReference>
<dbReference type="SUPFAM" id="SSF52943">
    <property type="entry name" value="ATP synthase (F1-ATPase), gamma subunit"/>
    <property type="match status" value="1"/>
</dbReference>
<dbReference type="PROSITE" id="PS00153">
    <property type="entry name" value="ATPASE_GAMMA"/>
    <property type="match status" value="1"/>
</dbReference>